<comment type="function">
    <text evidence="1">This protein is involved in the repair of mismatches in DNA. It is possible that it carries out the mismatch recognition step. This protein has a weak ATPase activity.</text>
</comment>
<comment type="similarity">
    <text evidence="1">Belongs to the DNA mismatch repair MutS family.</text>
</comment>
<gene>
    <name evidence="1" type="primary">mutS</name>
    <name type="ordered locus">DehaBAV1_1029</name>
</gene>
<protein>
    <recommendedName>
        <fullName evidence="1">DNA mismatch repair protein MutS</fullName>
    </recommendedName>
</protein>
<accession>A5FQC0</accession>
<proteinExistence type="inferred from homology"/>
<evidence type="ECO:0000255" key="1">
    <source>
        <dbReference type="HAMAP-Rule" id="MF_00096"/>
    </source>
</evidence>
<dbReference type="EMBL" id="CP000688">
    <property type="protein sequence ID" value="ABQ17609.1"/>
    <property type="molecule type" value="Genomic_DNA"/>
</dbReference>
<dbReference type="SMR" id="A5FQC0"/>
<dbReference type="KEGG" id="deb:DehaBAV1_1029"/>
<dbReference type="PATRIC" id="fig|216389.18.peg.1084"/>
<dbReference type="HOGENOM" id="CLU_002472_4_0_0"/>
<dbReference type="GO" id="GO:0005829">
    <property type="term" value="C:cytosol"/>
    <property type="evidence" value="ECO:0007669"/>
    <property type="project" value="TreeGrafter"/>
</dbReference>
<dbReference type="GO" id="GO:0005524">
    <property type="term" value="F:ATP binding"/>
    <property type="evidence" value="ECO:0007669"/>
    <property type="project" value="UniProtKB-UniRule"/>
</dbReference>
<dbReference type="GO" id="GO:0140664">
    <property type="term" value="F:ATP-dependent DNA damage sensor activity"/>
    <property type="evidence" value="ECO:0007669"/>
    <property type="project" value="InterPro"/>
</dbReference>
<dbReference type="GO" id="GO:0003684">
    <property type="term" value="F:damaged DNA binding"/>
    <property type="evidence" value="ECO:0007669"/>
    <property type="project" value="UniProtKB-UniRule"/>
</dbReference>
<dbReference type="GO" id="GO:0030983">
    <property type="term" value="F:mismatched DNA binding"/>
    <property type="evidence" value="ECO:0007669"/>
    <property type="project" value="InterPro"/>
</dbReference>
<dbReference type="GO" id="GO:0006298">
    <property type="term" value="P:mismatch repair"/>
    <property type="evidence" value="ECO:0007669"/>
    <property type="project" value="UniProtKB-UniRule"/>
</dbReference>
<dbReference type="CDD" id="cd03284">
    <property type="entry name" value="ABC_MutS1"/>
    <property type="match status" value="1"/>
</dbReference>
<dbReference type="FunFam" id="3.40.1170.10:FF:000001">
    <property type="entry name" value="DNA mismatch repair protein MutS"/>
    <property type="match status" value="1"/>
</dbReference>
<dbReference type="FunFam" id="3.40.50.300:FF:000870">
    <property type="entry name" value="MutS protein homolog 4"/>
    <property type="match status" value="1"/>
</dbReference>
<dbReference type="Gene3D" id="1.10.1420.10">
    <property type="match status" value="2"/>
</dbReference>
<dbReference type="Gene3D" id="3.40.1170.10">
    <property type="entry name" value="DNA repair protein MutS, domain I"/>
    <property type="match status" value="1"/>
</dbReference>
<dbReference type="Gene3D" id="3.30.420.110">
    <property type="entry name" value="MutS, connector domain"/>
    <property type="match status" value="1"/>
</dbReference>
<dbReference type="Gene3D" id="3.40.50.300">
    <property type="entry name" value="P-loop containing nucleotide triphosphate hydrolases"/>
    <property type="match status" value="1"/>
</dbReference>
<dbReference type="HAMAP" id="MF_00096">
    <property type="entry name" value="MutS"/>
    <property type="match status" value="1"/>
</dbReference>
<dbReference type="InterPro" id="IPR005748">
    <property type="entry name" value="DNA_mismatch_repair_MutS"/>
</dbReference>
<dbReference type="InterPro" id="IPR007695">
    <property type="entry name" value="DNA_mismatch_repair_MutS-lik_N"/>
</dbReference>
<dbReference type="InterPro" id="IPR017261">
    <property type="entry name" value="DNA_mismatch_repair_MutS/MSH"/>
</dbReference>
<dbReference type="InterPro" id="IPR000432">
    <property type="entry name" value="DNA_mismatch_repair_MutS_C"/>
</dbReference>
<dbReference type="InterPro" id="IPR007861">
    <property type="entry name" value="DNA_mismatch_repair_MutS_clamp"/>
</dbReference>
<dbReference type="InterPro" id="IPR007696">
    <property type="entry name" value="DNA_mismatch_repair_MutS_core"/>
</dbReference>
<dbReference type="InterPro" id="IPR016151">
    <property type="entry name" value="DNA_mismatch_repair_MutS_N"/>
</dbReference>
<dbReference type="InterPro" id="IPR036187">
    <property type="entry name" value="DNA_mismatch_repair_MutS_sf"/>
</dbReference>
<dbReference type="InterPro" id="IPR007860">
    <property type="entry name" value="DNA_mmatch_repair_MutS_con_dom"/>
</dbReference>
<dbReference type="InterPro" id="IPR045076">
    <property type="entry name" value="MutS"/>
</dbReference>
<dbReference type="InterPro" id="IPR036678">
    <property type="entry name" value="MutS_con_dom_sf"/>
</dbReference>
<dbReference type="InterPro" id="IPR027417">
    <property type="entry name" value="P-loop_NTPase"/>
</dbReference>
<dbReference type="NCBIfam" id="TIGR01070">
    <property type="entry name" value="mutS1"/>
    <property type="match status" value="1"/>
</dbReference>
<dbReference type="NCBIfam" id="NF003810">
    <property type="entry name" value="PRK05399.1"/>
    <property type="match status" value="1"/>
</dbReference>
<dbReference type="PANTHER" id="PTHR11361:SF34">
    <property type="entry name" value="DNA MISMATCH REPAIR PROTEIN MSH1, MITOCHONDRIAL"/>
    <property type="match status" value="1"/>
</dbReference>
<dbReference type="PANTHER" id="PTHR11361">
    <property type="entry name" value="DNA MISMATCH REPAIR PROTEIN MUTS FAMILY MEMBER"/>
    <property type="match status" value="1"/>
</dbReference>
<dbReference type="Pfam" id="PF01624">
    <property type="entry name" value="MutS_I"/>
    <property type="match status" value="1"/>
</dbReference>
<dbReference type="Pfam" id="PF05188">
    <property type="entry name" value="MutS_II"/>
    <property type="match status" value="1"/>
</dbReference>
<dbReference type="Pfam" id="PF05192">
    <property type="entry name" value="MutS_III"/>
    <property type="match status" value="1"/>
</dbReference>
<dbReference type="Pfam" id="PF05190">
    <property type="entry name" value="MutS_IV"/>
    <property type="match status" value="1"/>
</dbReference>
<dbReference type="Pfam" id="PF00488">
    <property type="entry name" value="MutS_V"/>
    <property type="match status" value="1"/>
</dbReference>
<dbReference type="PIRSF" id="PIRSF037677">
    <property type="entry name" value="DNA_mis_repair_Msh6"/>
    <property type="match status" value="1"/>
</dbReference>
<dbReference type="SMART" id="SM00534">
    <property type="entry name" value="MUTSac"/>
    <property type="match status" value="1"/>
</dbReference>
<dbReference type="SMART" id="SM00533">
    <property type="entry name" value="MUTSd"/>
    <property type="match status" value="1"/>
</dbReference>
<dbReference type="SUPFAM" id="SSF55271">
    <property type="entry name" value="DNA repair protein MutS, domain I"/>
    <property type="match status" value="1"/>
</dbReference>
<dbReference type="SUPFAM" id="SSF53150">
    <property type="entry name" value="DNA repair protein MutS, domain II"/>
    <property type="match status" value="1"/>
</dbReference>
<dbReference type="SUPFAM" id="SSF48334">
    <property type="entry name" value="DNA repair protein MutS, domain III"/>
    <property type="match status" value="1"/>
</dbReference>
<dbReference type="SUPFAM" id="SSF52540">
    <property type="entry name" value="P-loop containing nucleoside triphosphate hydrolases"/>
    <property type="match status" value="1"/>
</dbReference>
<dbReference type="PROSITE" id="PS00486">
    <property type="entry name" value="DNA_MISMATCH_REPAIR_2"/>
    <property type="match status" value="1"/>
</dbReference>
<name>MUTS_DEHMB</name>
<feature type="chain" id="PRO_1000075554" description="DNA mismatch repair protein MutS">
    <location>
        <begin position="1"/>
        <end position="858"/>
    </location>
</feature>
<feature type="binding site" evidence="1">
    <location>
        <begin position="613"/>
        <end position="620"/>
    </location>
    <ligand>
        <name>ATP</name>
        <dbReference type="ChEBI" id="CHEBI:30616"/>
    </ligand>
</feature>
<keyword id="KW-0067">ATP-binding</keyword>
<keyword id="KW-0227">DNA damage</keyword>
<keyword id="KW-0234">DNA repair</keyword>
<keyword id="KW-0238">DNA-binding</keyword>
<keyword id="KW-0547">Nucleotide-binding</keyword>
<sequence length="858" mass="95692">MENTTPLRKQYLDIKKNYPEAIVFFRLGDFYETFEEDARIAARELEIVLTSREMGKGLKVPLAGIPYHALDNYLSRLINKGYKVAICEQVTKPGETKGLVQRQVTRLVTPGTVVEPNLLQTKQNNFLLSLYLTEDSCGLAFADISTSEFGCTQTNIGELEAEISRLSPAEIILPKNQSLNLPIHLKATISKLDGYYFEADIAREHLLRHFECQNLSAYGCENMPLAISAAGALLNYLEETQKSSLKQLERLSVYTTADYMQMDSHTLSNLEIFRSSGGNSLKGSLLGILDQTRTAMGGRLLRKFLGQPLLKQSDIEKRLSAVDYFFEESLARTSLAKSLGQIADMERMANRIRQKTILPRELISLKNSLETVSAIHRQFGLMPPPRLAYFLNGLKPLPEMLDIINKTITDDPPSTLGDGKVIRAGFDPEMDKLCSLAGDARTFLSQMETRERERTGIKSLKLGYNRVFGYYIEISNANLGDMPPEFIRKQTLVNAERFITPELKEYENLILNAKERLLEMETGLYEQVLNQLGGFYSALLANAAALAALDVLSAFAEVAVRNSYVRPVFHPENRLDIRKGRHPMVEQGLGYGSFVANDISLSAEDCQIIILTGPNMAGKSTYLKQTALIVLMAQIGSYVPAETAELCLTDRIFTRIGAREDLSAGQSTFMVEMVETASILNTATSRSLLILDEIGRGTSTYDGLAIAQAVVEYIHSQPSLTAKTLFATHYHELVELASYLPRVKNYNIAVSEDRGEVVFLHKIVPGGVDKSYGIHVAKLAGLPKWVIKRAYEVLTELENPAKKQPKSRTCQPQLQLPMTGQTSVLEEEIKELEIESLTPLAALNKLYELKKKAEEQGL</sequence>
<reference key="1">
    <citation type="submission" date="2007-05" db="EMBL/GenBank/DDBJ databases">
        <title>Complete sequence of Dehalococcoides sp. BAV1.</title>
        <authorList>
            <consortium name="US DOE Joint Genome Institute"/>
            <person name="Copeland A."/>
            <person name="Lucas S."/>
            <person name="Lapidus A."/>
            <person name="Barry K."/>
            <person name="Detter J.C."/>
            <person name="Glavina del Rio T."/>
            <person name="Hammon N."/>
            <person name="Israni S."/>
            <person name="Pitluck S."/>
            <person name="Lowry S."/>
            <person name="Clum A."/>
            <person name="Schmutz J."/>
            <person name="Larimer F."/>
            <person name="Land M."/>
            <person name="Hauser L."/>
            <person name="Kyrpides N."/>
            <person name="Kim E."/>
            <person name="Ritalahti K.M."/>
            <person name="Loeffler F."/>
            <person name="Richardson P."/>
        </authorList>
    </citation>
    <scope>NUCLEOTIDE SEQUENCE [LARGE SCALE GENOMIC DNA]</scope>
    <source>
        <strain>ATCC BAA-2100 / JCM 16839 / KCTC 5957 / BAV1</strain>
    </source>
</reference>
<organism>
    <name type="scientific">Dehalococcoides mccartyi (strain ATCC BAA-2100 / JCM 16839 / KCTC 5957 / BAV1)</name>
    <dbReference type="NCBI Taxonomy" id="216389"/>
    <lineage>
        <taxon>Bacteria</taxon>
        <taxon>Bacillati</taxon>
        <taxon>Chloroflexota</taxon>
        <taxon>Dehalococcoidia</taxon>
        <taxon>Dehalococcoidales</taxon>
        <taxon>Dehalococcoidaceae</taxon>
        <taxon>Dehalococcoides</taxon>
    </lineage>
</organism>